<name>SYP_METJA</name>
<feature type="chain" id="PRO_0000139351" description="Proline--tRNA ligase">
    <location>
        <begin position="1"/>
        <end position="455"/>
    </location>
</feature>
<feature type="region of interest" description="Interaction with tRNA" evidence="1">
    <location>
        <begin position="329"/>
        <end position="359"/>
    </location>
</feature>
<feature type="binding site" evidence="1">
    <location>
        <position position="101"/>
    </location>
    <ligand>
        <name>L-proline</name>
        <dbReference type="ChEBI" id="CHEBI:60039"/>
    </ligand>
</feature>
<feature type="binding site" evidence="1">
    <location>
        <position position="103"/>
    </location>
    <ligand>
        <name>L-proline</name>
        <dbReference type="ChEBI" id="CHEBI:60039"/>
    </ligand>
</feature>
<feature type="binding site" evidence="1">
    <location>
        <position position="132"/>
    </location>
    <ligand>
        <name>ATP</name>
        <dbReference type="ChEBI" id="CHEBI:30616"/>
    </ligand>
</feature>
<feature type="binding site" evidence="1">
    <location>
        <position position="132"/>
    </location>
    <ligand>
        <name>L-proline</name>
        <dbReference type="ChEBI" id="CHEBI:60039"/>
    </ligand>
</feature>
<feature type="binding site" evidence="1">
    <location>
        <position position="134"/>
    </location>
    <ligand>
        <name>ATP</name>
        <dbReference type="ChEBI" id="CHEBI:30616"/>
    </ligand>
</feature>
<feature type="binding site" evidence="1">
    <location>
        <position position="216"/>
    </location>
    <ligand>
        <name>ATP</name>
        <dbReference type="ChEBI" id="CHEBI:30616"/>
    </ligand>
</feature>
<feature type="binding site" evidence="1">
    <location>
        <position position="219"/>
    </location>
    <ligand>
        <name>ATP</name>
        <dbReference type="ChEBI" id="CHEBI:30616"/>
    </ligand>
</feature>
<feature type="binding site" evidence="1">
    <location>
        <position position="221"/>
    </location>
    <ligand>
        <name>L-proline</name>
        <dbReference type="ChEBI" id="CHEBI:60039"/>
    </ligand>
</feature>
<feature type="binding site" evidence="1">
    <location>
        <position position="253"/>
    </location>
    <ligand>
        <name>ATP</name>
        <dbReference type="ChEBI" id="CHEBI:30616"/>
    </ligand>
</feature>
<feature type="binding site" evidence="1">
    <location>
        <position position="255"/>
    </location>
    <ligand>
        <name>ATP</name>
        <dbReference type="ChEBI" id="CHEBI:30616"/>
    </ligand>
</feature>
<feature type="helix" evidence="11">
    <location>
        <begin position="3"/>
        <end position="13"/>
    </location>
</feature>
<feature type="helix" evidence="11">
    <location>
        <begin position="31"/>
        <end position="50"/>
    </location>
</feature>
<feature type="strand" evidence="11">
    <location>
        <begin position="60"/>
        <end position="63"/>
    </location>
</feature>
<feature type="helix" evidence="11">
    <location>
        <begin position="64"/>
        <end position="70"/>
    </location>
</feature>
<feature type="strand" evidence="11">
    <location>
        <begin position="72"/>
        <end position="74"/>
    </location>
</feature>
<feature type="helix" evidence="11">
    <location>
        <begin position="75"/>
        <end position="80"/>
    </location>
</feature>
<feature type="strand" evidence="11">
    <location>
        <begin position="82"/>
        <end position="98"/>
    </location>
</feature>
<feature type="strand" evidence="11">
    <location>
        <begin position="100"/>
        <end position="102"/>
    </location>
</feature>
<feature type="helix" evidence="11">
    <location>
        <begin position="103"/>
        <end position="111"/>
    </location>
</feature>
<feature type="strand" evidence="11">
    <location>
        <begin position="124"/>
        <end position="128"/>
    </location>
</feature>
<feature type="turn" evidence="11">
    <location>
        <begin position="140"/>
        <end position="142"/>
    </location>
</feature>
<feature type="strand" evidence="11">
    <location>
        <begin position="150"/>
        <end position="159"/>
    </location>
</feature>
<feature type="helix" evidence="11">
    <location>
        <begin position="160"/>
        <end position="181"/>
    </location>
</feature>
<feature type="strand" evidence="11">
    <location>
        <begin position="186"/>
        <end position="190"/>
    </location>
</feature>
<feature type="strand" evidence="11">
    <location>
        <begin position="200"/>
        <end position="208"/>
    </location>
</feature>
<feature type="strand" evidence="11">
    <location>
        <begin position="214"/>
        <end position="224"/>
    </location>
</feature>
<feature type="helix" evidence="11">
    <location>
        <begin position="226"/>
        <end position="230"/>
    </location>
</feature>
<feature type="strand" evidence="11">
    <location>
        <begin position="234"/>
        <end position="236"/>
    </location>
</feature>
<feature type="strand" evidence="11">
    <location>
        <begin position="240"/>
        <end position="244"/>
    </location>
</feature>
<feature type="strand" evidence="11">
    <location>
        <begin position="246"/>
        <end position="252"/>
    </location>
</feature>
<feature type="helix" evidence="11">
    <location>
        <begin position="255"/>
        <end position="264"/>
    </location>
</feature>
<feature type="strand" evidence="11">
    <location>
        <begin position="278"/>
        <end position="285"/>
    </location>
</feature>
<feature type="helix" evidence="11">
    <location>
        <begin position="292"/>
        <end position="307"/>
    </location>
</feature>
<feature type="strand" evidence="11">
    <location>
        <begin position="312"/>
        <end position="314"/>
    </location>
</feature>
<feature type="helix" evidence="11">
    <location>
        <begin position="321"/>
        <end position="330"/>
    </location>
</feature>
<feature type="strand" evidence="11">
    <location>
        <begin position="334"/>
        <end position="339"/>
    </location>
</feature>
<feature type="helix" evidence="11">
    <location>
        <begin position="341"/>
        <end position="345"/>
    </location>
</feature>
<feature type="strand" evidence="11">
    <location>
        <begin position="348"/>
        <end position="353"/>
    </location>
</feature>
<feature type="turn" evidence="11">
    <location>
        <begin position="354"/>
        <end position="356"/>
    </location>
</feature>
<feature type="strand" evidence="11">
    <location>
        <begin position="359"/>
        <end position="363"/>
    </location>
</feature>
<feature type="helix" evidence="11">
    <location>
        <begin position="367"/>
        <end position="393"/>
    </location>
</feature>
<feature type="strand" evidence="11">
    <location>
        <begin position="394"/>
        <end position="396"/>
    </location>
</feature>
<feature type="helix" evidence="11">
    <location>
        <begin position="402"/>
        <end position="408"/>
    </location>
</feature>
<feature type="turn" evidence="11">
    <location>
        <begin position="409"/>
        <end position="412"/>
    </location>
</feature>
<feature type="strand" evidence="11">
    <location>
        <begin position="414"/>
        <end position="419"/>
    </location>
</feature>
<feature type="helix" evidence="11">
    <location>
        <begin position="422"/>
        <end position="424"/>
    </location>
</feature>
<feature type="helix" evidence="11">
    <location>
        <begin position="427"/>
        <end position="433"/>
    </location>
</feature>
<feature type="strand" evidence="11">
    <location>
        <begin position="437"/>
        <end position="442"/>
    </location>
</feature>
<feature type="strand" evidence="11">
    <location>
        <begin position="444"/>
        <end position="452"/>
    </location>
</feature>
<reference key="1">
    <citation type="journal article" date="1996" name="Science">
        <title>Complete genome sequence of the methanogenic archaeon, Methanococcus jannaschii.</title>
        <authorList>
            <person name="Bult C.J."/>
            <person name="White O."/>
            <person name="Olsen G.J."/>
            <person name="Zhou L."/>
            <person name="Fleischmann R.D."/>
            <person name="Sutton G.G."/>
            <person name="Blake J.A."/>
            <person name="FitzGerald L.M."/>
            <person name="Clayton R.A."/>
            <person name="Gocayne J.D."/>
            <person name="Kerlavage A.R."/>
            <person name="Dougherty B.A."/>
            <person name="Tomb J.-F."/>
            <person name="Adams M.D."/>
            <person name="Reich C.I."/>
            <person name="Overbeek R."/>
            <person name="Kirkness E.F."/>
            <person name="Weinstock K.G."/>
            <person name="Merrick J.M."/>
            <person name="Glodek A."/>
            <person name="Scott J.L."/>
            <person name="Geoghagen N.S.M."/>
            <person name="Weidman J.F."/>
            <person name="Fuhrmann J.L."/>
            <person name="Nguyen D."/>
            <person name="Utterback T.R."/>
            <person name="Kelley J.M."/>
            <person name="Peterson J.D."/>
            <person name="Sadow P.W."/>
            <person name="Hanna M.C."/>
            <person name="Cotton M.D."/>
            <person name="Roberts K.M."/>
            <person name="Hurst M.A."/>
            <person name="Kaine B.P."/>
            <person name="Borodovsky M."/>
            <person name="Klenk H.-P."/>
            <person name="Fraser C.M."/>
            <person name="Smith H.O."/>
            <person name="Woese C.R."/>
            <person name="Venter J.C."/>
        </authorList>
    </citation>
    <scope>NUCLEOTIDE SEQUENCE [LARGE SCALE GENOMIC DNA]</scope>
    <source>
        <strain>ATCC 43067 / DSM 2661 / JAL-1 / JCM 10045 / NBRC 100440</strain>
    </source>
</reference>
<reference key="2">
    <citation type="journal article" date="2000" name="Science">
        <title>One polypeptide with two aminoacyl-tRNA synthetase activities.</title>
        <authorList>
            <person name="Stathopoulos C."/>
            <person name="Li T."/>
            <person name="Longman R."/>
            <person name="Vothknecht U.C."/>
            <person name="Becker H.D."/>
            <person name="Ibba M."/>
            <person name="Soell D."/>
        </authorList>
    </citation>
    <scope>PROTEIN SEQUENCE OF 1-18</scope>
    <scope>FUNCTION AS A PROLYL-TRNA SYNTHETASE</scope>
    <scope>PUTATIVE FUNCTION AS A CYSTEINYL-TRNA SYNTHETASE</scope>
</reference>
<reference key="3">
    <citation type="journal article" date="2000" name="Biochemistry">
        <title>Synthesis of cysteinyl-tRNA(Cys) by a genome that lacks the normal cysteine-tRNA synthetase.</title>
        <authorList>
            <person name="Lipman R.S.A."/>
            <person name="Sowers K.R."/>
            <person name="Hou Y.-M."/>
        </authorList>
    </citation>
    <scope>FUNCTION AS A PROLYL-TRNA SYNTHETASE</scope>
    <scope>PUTATIVE FUNCTION AS A CYSTEINYL-TRNA SYNTHETASE</scope>
    <scope>INHIBITION BY PROLINAMIDE</scope>
    <source>
        <strain>ATCC 43067 / DSM 2661 / JAL-1 / JCM 10045 / NBRC 100440</strain>
    </source>
</reference>
<reference key="4">
    <citation type="journal article" date="2001" name="Biochemistry">
        <title>Methanococcus jannaschii prolyl-cysteinyl-tRNA synthetase possesses overlapping amino acid binding sites.</title>
        <authorList>
            <person name="Stathopoulos C."/>
            <person name="Jacquin-Becker C."/>
            <person name="Becker H.D."/>
            <person name="Li T."/>
            <person name="Ambrogelly A."/>
            <person name="Longman R."/>
            <person name="Soell D."/>
        </authorList>
    </citation>
    <scope>FUNCTION AS A PROLYL-TRNA SYNTHETASE</scope>
    <scope>PUTATIVE FUNCTION AS A CYSTEINYL-TRNA SYNTHETASE</scope>
    <scope>KINETIC PARAMETERS</scope>
</reference>
<reference key="5">
    <citation type="journal article" date="2001" name="J. Biol. Chem.">
        <title>Species-specific differences in amino acid editing by class II prolyl-tRNA synthetase.</title>
        <authorList>
            <person name="Beuning P.J."/>
            <person name="Musier-Forsyth K."/>
        </authorList>
    </citation>
    <scope>MISAMINOACYLATION OF TRNA(PRO) WITH ALANINE OR CYSTEINE</scope>
    <scope>EDITING ACTIVITY AGAINST ALANINE</scope>
    <scope>KINETIC PARAMETERS</scope>
</reference>
<reference key="6">
    <citation type="journal article" date="2002" name="J. Biol. Chem.">
        <title>Cysteine activation is an inherent in vitro property of prolyl-tRNA synthetases.</title>
        <authorList>
            <person name="Ahel I."/>
            <person name="Stathopoulos C."/>
            <person name="Ambrogelly A."/>
            <person name="Sauerwald A."/>
            <person name="Toogood H."/>
            <person name="Hartsch T."/>
            <person name="Soell D."/>
        </authorList>
    </citation>
    <scope>MISAMINOACYLATION OF TRNA(PRO) WITH CYSTEINE</scope>
    <scope>KINETIC PARAMETERS</scope>
</reference>
<reference key="7">
    <citation type="journal article" date="2002" name="J. Biol. Chem.">
        <title>Methanocaldococcus jannaschii prolyl-tRNA synthetase charges tRNA(Pro) with cysteine.</title>
        <authorList>
            <person name="Ambrogelly A."/>
            <person name="Ahel I."/>
            <person name="Polycarpo C."/>
            <person name="Bunjun-Srihari S."/>
            <person name="Krett B."/>
            <person name="Jacquin-Becker C."/>
            <person name="Ruan B."/>
            <person name="Koehrer C."/>
            <person name="Stathopoulos C."/>
            <person name="RajBhandary U.L."/>
            <person name="Soell D."/>
        </authorList>
    </citation>
    <scope>MISAMINOACYLATION OF TRNA(PRO) WITH CYSTEINE</scope>
    <scope>INABILITY TO SYNTHESIZE CYSTEINYL-TRNA(CYS)</scope>
    <scope>LACK OF EDITING ACTIVITY</scope>
</reference>
<reference key="8">
    <citation type="journal article" date="2002" name="J. Mol. Biol.">
        <title>Amino acid activation of a dual-specificity tRNA synthetase is independent of tRNA.</title>
        <authorList>
            <person name="Lipman R.S.A."/>
            <person name="Beuning P.J."/>
            <person name="Musier-Forsyth K."/>
            <person name="Hou Y.-M."/>
        </authorList>
    </citation>
    <scope>FUNCTION IN CYSTEINE ACTIVATION</scope>
</reference>
<reference key="9">
    <citation type="journal article" date="2004" name="J. Bacteriol.">
        <title>Cysteinyl-tRNA(Cys) formation in Methanocaldococcus jannaschii: the mechanism is still unknown.</title>
        <authorList>
            <person name="Ruan B."/>
            <person name="Nakano H."/>
            <person name="Tanaka M."/>
            <person name="Mills J.A."/>
            <person name="DeVito J.A."/>
            <person name="Min B."/>
            <person name="Low K.B."/>
            <person name="Battista J.R."/>
            <person name="Soell D."/>
        </authorList>
    </citation>
    <scope>INABILITY TO SYNTHESIZE CYSTEINYL-TRNA(CYS)</scope>
</reference>
<reference key="10">
    <citation type="journal article" date="2005" name="FEBS Lett.">
        <title>Asymmetric behavior of archaeal prolyl-tRNA synthetase.</title>
        <authorList>
            <person name="Ambrogelly A."/>
            <person name="Kamtekar S."/>
            <person name="Stathopoulos C."/>
            <person name="Kennedy D."/>
            <person name="Soell D."/>
        </authorList>
    </citation>
    <scope>SUBUNIT</scope>
</reference>
<reference key="11">
    <citation type="journal article" date="2003" name="Proc. Natl. Acad. Sci. U.S.A.">
        <title>The structural basis of cysteine aminoacylation of tRNAPro by prolyl-tRNA synthetases.</title>
        <authorList>
            <person name="Kamtekar S."/>
            <person name="Kennedy W.D."/>
            <person name="Wang J."/>
            <person name="Stathopoulos C."/>
            <person name="Soell D."/>
            <person name="Steitz T.A."/>
        </authorList>
    </citation>
    <scope>X-RAY CRYSTALLOGRAPHY (3.2 ANGSTROMS) OF APOENZYME</scope>
    <scope>SUBUNIT</scope>
</reference>
<gene>
    <name type="primary">proS</name>
    <name type="ordered locus">MJ1238</name>
</gene>
<sequence length="455" mass="53309">MEFSEWYSDILEKAEIYDVRYPIKGCGVYLPYGFKIRRYTFEIIRNLLDESGHDEALFPMLIPEDLLAKEAEHIKGFEDEVYWVTHGGKTQLDVKLALRPTSETPIYYMMKLWVKVHTDLPIKIYQIVNTFRYETKHTRPLIRLREIMTFKEAHTAHSTKEEAENQVKEAISIYKKFFDTLGIPYLISKRPEWDKFPGAEYTMAFDTIFPDGRTMQIATVHNLGQNFSKTFEIIFETPTGDKDYAYQTCYGISDRVIASIIAIHGDEKGLILPPIVAPIQVVIVPLIFKGKEDIVMEKAKEIYEKLKGKFRVHIDDRDIRPGRKFNDWEIKGVPLRIEVGPKDIENKKITLFRRDTMEKFQVDETQLMEVVEKTLNNIMENIKNRAWEKFENFITILEDINPDEIKNILSEKRGVILVPFKEEIYNEELEEKVEATILGETEYKGNKYIAIAKTY</sequence>
<proteinExistence type="evidence at protein level"/>
<organism>
    <name type="scientific">Methanocaldococcus jannaschii (strain ATCC 43067 / DSM 2661 / JAL-1 / JCM 10045 / NBRC 100440)</name>
    <name type="common">Methanococcus jannaschii</name>
    <dbReference type="NCBI Taxonomy" id="243232"/>
    <lineage>
        <taxon>Archaea</taxon>
        <taxon>Methanobacteriati</taxon>
        <taxon>Methanobacteriota</taxon>
        <taxon>Methanomada group</taxon>
        <taxon>Methanococci</taxon>
        <taxon>Methanococcales</taxon>
        <taxon>Methanocaldococcaceae</taxon>
        <taxon>Methanocaldococcus</taxon>
    </lineage>
</organism>
<accession>Q58635</accession>
<dbReference type="EC" id="6.1.1.15"/>
<dbReference type="EMBL" id="L77117">
    <property type="protein sequence ID" value="AAB99242.1"/>
    <property type="molecule type" value="Genomic_DNA"/>
</dbReference>
<dbReference type="PIR" id="E64454">
    <property type="entry name" value="E64454"/>
</dbReference>
<dbReference type="RefSeq" id="WP_010870750.1">
    <property type="nucleotide sequence ID" value="NC_000909.1"/>
</dbReference>
<dbReference type="PDB" id="1NJ8">
    <property type="method" value="X-ray"/>
    <property type="resolution" value="3.20 A"/>
    <property type="chains" value="A/B/C/D=2-455"/>
</dbReference>
<dbReference type="PDBsum" id="1NJ8"/>
<dbReference type="SMR" id="Q58635"/>
<dbReference type="FunCoup" id="Q58635">
    <property type="interactions" value="165"/>
</dbReference>
<dbReference type="STRING" id="243232.MJ_1238"/>
<dbReference type="PaxDb" id="243232-MJ_1238"/>
<dbReference type="EnsemblBacteria" id="AAB99242">
    <property type="protein sequence ID" value="AAB99242"/>
    <property type="gene ID" value="MJ_1238"/>
</dbReference>
<dbReference type="GeneID" id="1452134"/>
<dbReference type="KEGG" id="mja:MJ_1238"/>
<dbReference type="eggNOG" id="arCOG00402">
    <property type="taxonomic scope" value="Archaea"/>
</dbReference>
<dbReference type="HOGENOM" id="CLU_001882_4_2_2"/>
<dbReference type="InParanoid" id="Q58635"/>
<dbReference type="OrthoDB" id="7375at2157"/>
<dbReference type="PhylomeDB" id="Q58635"/>
<dbReference type="BRENDA" id="6.1.1.15">
    <property type="organism ID" value="3260"/>
</dbReference>
<dbReference type="SABIO-RK" id="Q58635"/>
<dbReference type="EvolutionaryTrace" id="Q58635"/>
<dbReference type="Proteomes" id="UP000000805">
    <property type="component" value="Chromosome"/>
</dbReference>
<dbReference type="GO" id="GO:0005737">
    <property type="term" value="C:cytoplasm"/>
    <property type="evidence" value="ECO:0007669"/>
    <property type="project" value="UniProtKB-SubCell"/>
</dbReference>
<dbReference type="GO" id="GO:0005524">
    <property type="term" value="F:ATP binding"/>
    <property type="evidence" value="ECO:0007669"/>
    <property type="project" value="UniProtKB-UniRule"/>
</dbReference>
<dbReference type="GO" id="GO:0004827">
    <property type="term" value="F:proline-tRNA ligase activity"/>
    <property type="evidence" value="ECO:0000318"/>
    <property type="project" value="GO_Central"/>
</dbReference>
<dbReference type="GO" id="GO:0006433">
    <property type="term" value="P:prolyl-tRNA aminoacylation"/>
    <property type="evidence" value="ECO:0000318"/>
    <property type="project" value="GO_Central"/>
</dbReference>
<dbReference type="CDD" id="cd00862">
    <property type="entry name" value="ProRS_anticodon_zinc"/>
    <property type="match status" value="1"/>
</dbReference>
<dbReference type="CDD" id="cd00778">
    <property type="entry name" value="ProRS_core_arch_euk"/>
    <property type="match status" value="1"/>
</dbReference>
<dbReference type="FunFam" id="3.40.50.800:FF:000005">
    <property type="entry name" value="bifunctional glutamate/proline--tRNA ligase"/>
    <property type="match status" value="1"/>
</dbReference>
<dbReference type="FunFam" id="3.30.930.10:FF:000037">
    <property type="entry name" value="Proline--tRNA ligase"/>
    <property type="match status" value="1"/>
</dbReference>
<dbReference type="Gene3D" id="3.40.50.800">
    <property type="entry name" value="Anticodon-binding domain"/>
    <property type="match status" value="1"/>
</dbReference>
<dbReference type="Gene3D" id="3.30.930.10">
    <property type="entry name" value="Bira Bifunctional Protein, Domain 2"/>
    <property type="match status" value="1"/>
</dbReference>
<dbReference type="Gene3D" id="3.30.110.30">
    <property type="entry name" value="C-terminal domain of ProRS"/>
    <property type="match status" value="1"/>
</dbReference>
<dbReference type="HAMAP" id="MF_01571">
    <property type="entry name" value="Pro_tRNA_synth_type3"/>
    <property type="match status" value="1"/>
</dbReference>
<dbReference type="InterPro" id="IPR002314">
    <property type="entry name" value="aa-tRNA-synt_IIb"/>
</dbReference>
<dbReference type="InterPro" id="IPR006195">
    <property type="entry name" value="aa-tRNA-synth_II"/>
</dbReference>
<dbReference type="InterPro" id="IPR045864">
    <property type="entry name" value="aa-tRNA-synth_II/BPL/LPL"/>
</dbReference>
<dbReference type="InterPro" id="IPR004154">
    <property type="entry name" value="Anticodon-bd"/>
</dbReference>
<dbReference type="InterPro" id="IPR036621">
    <property type="entry name" value="Anticodon-bd_dom_sf"/>
</dbReference>
<dbReference type="InterPro" id="IPR002316">
    <property type="entry name" value="Pro-tRNA-ligase_IIa"/>
</dbReference>
<dbReference type="InterPro" id="IPR004499">
    <property type="entry name" value="Pro-tRNA-ligase_IIa_arc-type"/>
</dbReference>
<dbReference type="InterPro" id="IPR017449">
    <property type="entry name" value="Pro-tRNA_synth_II"/>
</dbReference>
<dbReference type="InterPro" id="IPR015264">
    <property type="entry name" value="Pro-tRNA_synth_II_arc"/>
</dbReference>
<dbReference type="InterPro" id="IPR033721">
    <property type="entry name" value="ProRS_core_arch_euk"/>
</dbReference>
<dbReference type="NCBIfam" id="TIGR00408">
    <property type="entry name" value="proS_fam_I"/>
    <property type="match status" value="1"/>
</dbReference>
<dbReference type="PANTHER" id="PTHR43382:SF2">
    <property type="entry name" value="BIFUNCTIONAL GLUTAMATE_PROLINE--TRNA LIGASE"/>
    <property type="match status" value="1"/>
</dbReference>
<dbReference type="PANTHER" id="PTHR43382">
    <property type="entry name" value="PROLYL-TRNA SYNTHETASE"/>
    <property type="match status" value="1"/>
</dbReference>
<dbReference type="Pfam" id="PF03129">
    <property type="entry name" value="HGTP_anticodon"/>
    <property type="match status" value="1"/>
</dbReference>
<dbReference type="Pfam" id="PF09181">
    <property type="entry name" value="ProRS-C_2"/>
    <property type="match status" value="1"/>
</dbReference>
<dbReference type="Pfam" id="PF00587">
    <property type="entry name" value="tRNA-synt_2b"/>
    <property type="match status" value="1"/>
</dbReference>
<dbReference type="PRINTS" id="PR01046">
    <property type="entry name" value="TRNASYNTHPRO"/>
</dbReference>
<dbReference type="SUPFAM" id="SSF64586">
    <property type="entry name" value="C-terminal domain of ProRS"/>
    <property type="match status" value="1"/>
</dbReference>
<dbReference type="SUPFAM" id="SSF52954">
    <property type="entry name" value="Class II aaRS ABD-related"/>
    <property type="match status" value="1"/>
</dbReference>
<dbReference type="SUPFAM" id="SSF55681">
    <property type="entry name" value="Class II aaRS and biotin synthetases"/>
    <property type="match status" value="1"/>
</dbReference>
<dbReference type="PROSITE" id="PS50862">
    <property type="entry name" value="AA_TRNA_LIGASE_II"/>
    <property type="match status" value="1"/>
</dbReference>
<protein>
    <recommendedName>
        <fullName>Proline--tRNA ligase</fullName>
        <ecNumber>6.1.1.15</ecNumber>
    </recommendedName>
    <alternativeName>
        <fullName>Prolyl-tRNA synthetase</fullName>
        <shortName>ProRS</shortName>
    </alternativeName>
</protein>
<evidence type="ECO:0000250" key="1"/>
<evidence type="ECO:0000269" key="2">
    <source>
    </source>
</evidence>
<evidence type="ECO:0000269" key="3">
    <source>
    </source>
</evidence>
<evidence type="ECO:0000269" key="4">
    <source>
    </source>
</evidence>
<evidence type="ECO:0000269" key="5">
    <source>
    </source>
</evidence>
<evidence type="ECO:0000269" key="6">
    <source>
    </source>
</evidence>
<evidence type="ECO:0000269" key="7">
    <source>
    </source>
</evidence>
<evidence type="ECO:0000269" key="8">
    <source>
    </source>
</evidence>
<evidence type="ECO:0000269" key="9">
    <source>
    </source>
</evidence>
<evidence type="ECO:0000305" key="10"/>
<evidence type="ECO:0007829" key="11">
    <source>
        <dbReference type="PDB" id="1NJ8"/>
    </source>
</evidence>
<keyword id="KW-0002">3D-structure</keyword>
<keyword id="KW-0030">Aminoacyl-tRNA synthetase</keyword>
<keyword id="KW-0067">ATP-binding</keyword>
<keyword id="KW-0963">Cytoplasm</keyword>
<keyword id="KW-0903">Direct protein sequencing</keyword>
<keyword id="KW-0436">Ligase</keyword>
<keyword id="KW-0547">Nucleotide-binding</keyword>
<keyword id="KW-0648">Protein biosynthesis</keyword>
<keyword id="KW-1185">Reference proteome</keyword>
<comment type="function">
    <text evidence="2 3 4 6">Catalyzes the attachment of proline to tRNA(Pro) in a two-step reaction: proline is first activated by ATP to form Pro-AMP and then transferred to the acceptor end of tRNA(Pro). Can inadvertently accommodate and process non-cognate amino acids such as cysteine and alanine.</text>
</comment>
<comment type="catalytic activity">
    <reaction>
        <text>tRNA(Pro) + L-proline + ATP = L-prolyl-tRNA(Pro) + AMP + diphosphate</text>
        <dbReference type="Rhea" id="RHEA:14305"/>
        <dbReference type="Rhea" id="RHEA-COMP:9700"/>
        <dbReference type="Rhea" id="RHEA-COMP:9702"/>
        <dbReference type="ChEBI" id="CHEBI:30616"/>
        <dbReference type="ChEBI" id="CHEBI:33019"/>
        <dbReference type="ChEBI" id="CHEBI:60039"/>
        <dbReference type="ChEBI" id="CHEBI:78442"/>
        <dbReference type="ChEBI" id="CHEBI:78532"/>
        <dbReference type="ChEBI" id="CHEBI:456215"/>
        <dbReference type="EC" id="6.1.1.15"/>
    </reaction>
</comment>
<comment type="activity regulation">
    <text>Inhibited by high concentrations of prolinamide.</text>
</comment>
<comment type="biophysicochemical properties">
    <kinetics>
        <KM evidence="4 5 7">0.28 mM for proline (at 60 degrees Celsius)</KM>
        <KM evidence="4 5 7">0.09 mM for cysteine (at 60 degrees Celsius)</KM>
    </kinetics>
</comment>
<comment type="subunit">
    <text evidence="8 9">Homodimer. The dimer is functionally asymmetric: only one of the two active sites at a time is able to form prolyl-adenylate, and only one tRNA molecule binds per dimer.</text>
</comment>
<comment type="subcellular location">
    <subcellularLocation>
        <location>Cytoplasm</location>
    </subcellularLocation>
</comment>
<comment type="domain">
    <text>Consists of three domains: the N-terminal catalytic domain, the anticodon-binding domain and the C-terminal extension.</text>
</comment>
<comment type="similarity">
    <text evidence="10">Belongs to the class-II aminoacyl-tRNA synthetase family. ProS type 3 subfamily.</text>
</comment>
<comment type="caution">
    <text evidence="10">Was originally (PubMed:10642548, PubMed:10869184, PubMed:11141055) thought to have both prolyl- and cysteinyl-tRNA synthetase activities (ProCysRS). However, recent biochemical and structural studies show that ProRS misaminoacylates tRNA(Pro) with cysteine but is unable to aminoacylate tRNA(Cys). These conflicting results may be due to the fact that much of the previous work was done with unfractionated tRNA.</text>
</comment>
<comment type="caution">
    <text evidence="10">According to PubMed:12130658, ProRS is unable to edit the misacylated Cys-tRNA(Pro) and Ala-tRNA(Pro), whereas according to PubMed:11408489, it hydrolyzes Ala-AMP and Ala-tRNA(Pro) by 'pretransfer' and 'posttransfer' editing activities, respectively.</text>
</comment>